<reference key="1">
    <citation type="journal article" date="2003" name="Nature">
        <title>Yeast genome duplication was followed by asynchronous differentiation of duplicated genes.</title>
        <authorList>
            <person name="Langkjaer R.B."/>
            <person name="Cliften P.F."/>
            <person name="Johnston M."/>
            <person name="Piskur J."/>
        </authorList>
    </citation>
    <scope>NUCLEOTIDE SEQUENCE [GENOMIC DNA]</scope>
    <source>
        <strain>ATCC 58438 / CBS 3082 / BCRC 21498 / NBRC 1685 / JCM 7257 / NCYC 543 / NRRL Y-12651</strain>
    </source>
</reference>
<feature type="chain" id="PRO_0000295502" description="Protein transport protein SEC24">
    <location>
        <begin position="1"/>
        <end position="886" status="greater than"/>
    </location>
</feature>
<feature type="region of interest" description="Disordered" evidence="2">
    <location>
        <begin position="31"/>
        <end position="51"/>
    </location>
</feature>
<feature type="region of interest" description="Zinc finger-like">
    <location>
        <begin position="220"/>
        <end position="245"/>
    </location>
</feature>
<feature type="binding site" evidence="1">
    <location>
        <position position="220"/>
    </location>
    <ligand>
        <name>Zn(2+)</name>
        <dbReference type="ChEBI" id="CHEBI:29105"/>
    </ligand>
</feature>
<feature type="binding site" evidence="1">
    <location>
        <position position="223"/>
    </location>
    <ligand>
        <name>Zn(2+)</name>
        <dbReference type="ChEBI" id="CHEBI:29105"/>
    </ligand>
</feature>
<feature type="binding site" evidence="1">
    <location>
        <position position="242"/>
    </location>
    <ligand>
        <name>Zn(2+)</name>
        <dbReference type="ChEBI" id="CHEBI:29105"/>
    </ligand>
</feature>
<feature type="binding site" evidence="1">
    <location>
        <position position="245"/>
    </location>
    <ligand>
        <name>Zn(2+)</name>
        <dbReference type="ChEBI" id="CHEBI:29105"/>
    </ligand>
</feature>
<feature type="non-terminal residue">
    <location>
        <position position="886"/>
    </location>
</feature>
<keyword id="KW-0963">Cytoplasm</keyword>
<keyword id="KW-0968">Cytoplasmic vesicle</keyword>
<keyword id="KW-0256">Endoplasmic reticulum</keyword>
<keyword id="KW-0931">ER-Golgi transport</keyword>
<keyword id="KW-0333">Golgi apparatus</keyword>
<keyword id="KW-0472">Membrane</keyword>
<keyword id="KW-0479">Metal-binding</keyword>
<keyword id="KW-0653">Protein transport</keyword>
<keyword id="KW-0813">Transport</keyword>
<keyword id="KW-0862">Zinc</keyword>
<accession>Q875Q0</accession>
<comment type="function">
    <text evidence="1">Component of the coat protein complex II (COPII) which promotes the formation of transport vesicles from the endoplasmic reticulum (ER). The coat has two main functions, the physical deformation of the endoplasmic reticulum membrane into vesicles and the selection of cargo molecules (By similarity).</text>
</comment>
<comment type="subunit">
    <text evidence="1">The COPII coat is composed of at least 5 proteins: the SEC23/24 complex, the SEC13/31 complex, and the protein SAR1. Golgi apparatus membrane; Peripheral membrane protein; Cytoplasmic side.</text>
</comment>
<comment type="subcellular location">
    <subcellularLocation>
        <location evidence="1">Cytoplasm</location>
    </subcellularLocation>
    <subcellularLocation>
        <location evidence="1">Cytoplasmic vesicle</location>
        <location evidence="1">COPII-coated vesicle membrane</location>
        <topology evidence="1">Peripheral membrane protein</topology>
        <orientation evidence="1">Cytoplasmic side</orientation>
    </subcellularLocation>
    <subcellularLocation>
        <location evidence="1">Endoplasmic reticulum membrane</location>
        <topology evidence="1">Peripheral membrane protein</topology>
        <orientation evidence="1">Cytoplasmic side</orientation>
    </subcellularLocation>
    <subcellularLocation>
        <location evidence="1">Golgi apparatus membrane</location>
        <topology evidence="1">Peripheral membrane protein</topology>
        <orientation evidence="1">Cytoplasmic side</orientation>
    </subcellularLocation>
</comment>
<comment type="similarity">
    <text evidence="3">Belongs to the SEC23/SEC24 family. SEC24 subfamily.</text>
</comment>
<evidence type="ECO:0000250" key="1"/>
<evidence type="ECO:0000256" key="2">
    <source>
        <dbReference type="SAM" id="MobiDB-lite"/>
    </source>
</evidence>
<evidence type="ECO:0000305" key="3"/>
<gene>
    <name type="primary">SEC24</name>
</gene>
<organism>
    <name type="scientific">Lachancea kluyveri (strain ATCC 58438 / CBS 3082 / BCRC 21498 / NBRC 1685 / JCM 7257 / NCYC 543 / NRRL Y-12651)</name>
    <name type="common">Yeast</name>
    <name type="synonym">Saccharomyces kluyveri</name>
    <dbReference type="NCBI Taxonomy" id="226302"/>
    <lineage>
        <taxon>Eukaryota</taxon>
        <taxon>Fungi</taxon>
        <taxon>Dikarya</taxon>
        <taxon>Ascomycota</taxon>
        <taxon>Saccharomycotina</taxon>
        <taxon>Saccharomycetes</taxon>
        <taxon>Saccharomycetales</taxon>
        <taxon>Saccharomycetaceae</taxon>
        <taxon>Lachancea</taxon>
    </lineage>
</organism>
<dbReference type="EMBL" id="AY145019">
    <property type="protein sequence ID" value="AAO32581.1"/>
    <property type="molecule type" value="Genomic_DNA"/>
</dbReference>
<dbReference type="GO" id="GO:0030127">
    <property type="term" value="C:COPII vesicle coat"/>
    <property type="evidence" value="ECO:0007669"/>
    <property type="project" value="InterPro"/>
</dbReference>
<dbReference type="GO" id="GO:0070971">
    <property type="term" value="C:endoplasmic reticulum exit site"/>
    <property type="evidence" value="ECO:0007669"/>
    <property type="project" value="TreeGrafter"/>
</dbReference>
<dbReference type="GO" id="GO:0005789">
    <property type="term" value="C:endoplasmic reticulum membrane"/>
    <property type="evidence" value="ECO:0007669"/>
    <property type="project" value="UniProtKB-SubCell"/>
</dbReference>
<dbReference type="GO" id="GO:0000139">
    <property type="term" value="C:Golgi membrane"/>
    <property type="evidence" value="ECO:0007669"/>
    <property type="project" value="UniProtKB-SubCell"/>
</dbReference>
<dbReference type="GO" id="GO:0000149">
    <property type="term" value="F:SNARE binding"/>
    <property type="evidence" value="ECO:0007669"/>
    <property type="project" value="TreeGrafter"/>
</dbReference>
<dbReference type="GO" id="GO:0008270">
    <property type="term" value="F:zinc ion binding"/>
    <property type="evidence" value="ECO:0007669"/>
    <property type="project" value="InterPro"/>
</dbReference>
<dbReference type="GO" id="GO:0090110">
    <property type="term" value="P:COPII-coated vesicle cargo loading"/>
    <property type="evidence" value="ECO:0007669"/>
    <property type="project" value="TreeGrafter"/>
</dbReference>
<dbReference type="GO" id="GO:0006886">
    <property type="term" value="P:intracellular protein transport"/>
    <property type="evidence" value="ECO:0007669"/>
    <property type="project" value="InterPro"/>
</dbReference>
<dbReference type="CDD" id="cd01479">
    <property type="entry name" value="Sec24-like"/>
    <property type="match status" value="1"/>
</dbReference>
<dbReference type="FunFam" id="3.40.20.10:FF:000049">
    <property type="entry name" value="Vesicle coat component"/>
    <property type="match status" value="1"/>
</dbReference>
<dbReference type="FunFam" id="3.40.50.410:FF:000081">
    <property type="entry name" value="Vesicle coat component"/>
    <property type="match status" value="1"/>
</dbReference>
<dbReference type="Gene3D" id="2.60.40.1670">
    <property type="entry name" value="beta-sandwich domain of Sec23/24"/>
    <property type="match status" value="1"/>
</dbReference>
<dbReference type="Gene3D" id="1.20.120.730">
    <property type="entry name" value="Sec23/Sec24 helical domain"/>
    <property type="match status" value="1"/>
</dbReference>
<dbReference type="Gene3D" id="3.40.20.10">
    <property type="entry name" value="Severin"/>
    <property type="match status" value="1"/>
</dbReference>
<dbReference type="Gene3D" id="3.40.50.410">
    <property type="entry name" value="von Willebrand factor, type A domain"/>
    <property type="match status" value="1"/>
</dbReference>
<dbReference type="Gene3D" id="2.30.30.380">
    <property type="entry name" value="Zn-finger domain of Sec23/24"/>
    <property type="match status" value="1"/>
</dbReference>
<dbReference type="InterPro" id="IPR029006">
    <property type="entry name" value="ADF-H/Gelsolin-like_dom_sf"/>
</dbReference>
<dbReference type="InterPro" id="IPR007123">
    <property type="entry name" value="Gelsolin-like_dom"/>
</dbReference>
<dbReference type="InterPro" id="IPR036180">
    <property type="entry name" value="Gelsolin-like_dom_sf"/>
</dbReference>
<dbReference type="InterPro" id="IPR006900">
    <property type="entry name" value="Sec23/24_helical_dom"/>
</dbReference>
<dbReference type="InterPro" id="IPR036175">
    <property type="entry name" value="Sec23/24_helical_dom_sf"/>
</dbReference>
<dbReference type="InterPro" id="IPR006896">
    <property type="entry name" value="Sec23/24_trunk_dom"/>
</dbReference>
<dbReference type="InterPro" id="IPR012990">
    <property type="entry name" value="Sec23_24_beta_S"/>
</dbReference>
<dbReference type="InterPro" id="IPR050550">
    <property type="entry name" value="SEC23_SEC24_subfamily"/>
</dbReference>
<dbReference type="InterPro" id="IPR041742">
    <property type="entry name" value="Sec24-like_trunk_dom"/>
</dbReference>
<dbReference type="InterPro" id="IPR036465">
    <property type="entry name" value="vWFA_dom_sf"/>
</dbReference>
<dbReference type="InterPro" id="IPR006895">
    <property type="entry name" value="Znf_Sec23_Sec24"/>
</dbReference>
<dbReference type="InterPro" id="IPR036174">
    <property type="entry name" value="Znf_Sec23_Sec24_sf"/>
</dbReference>
<dbReference type="PANTHER" id="PTHR13803">
    <property type="entry name" value="SEC24-RELATED PROTEIN"/>
    <property type="match status" value="1"/>
</dbReference>
<dbReference type="PANTHER" id="PTHR13803:SF39">
    <property type="entry name" value="SECRETORY 24AB, ISOFORM A"/>
    <property type="match status" value="1"/>
</dbReference>
<dbReference type="Pfam" id="PF00626">
    <property type="entry name" value="Gelsolin"/>
    <property type="match status" value="1"/>
</dbReference>
<dbReference type="Pfam" id="PF08033">
    <property type="entry name" value="Sec23_BS"/>
    <property type="match status" value="1"/>
</dbReference>
<dbReference type="Pfam" id="PF04815">
    <property type="entry name" value="Sec23_helical"/>
    <property type="match status" value="1"/>
</dbReference>
<dbReference type="Pfam" id="PF04811">
    <property type="entry name" value="Sec23_trunk"/>
    <property type="match status" value="1"/>
</dbReference>
<dbReference type="Pfam" id="PF04810">
    <property type="entry name" value="zf-Sec23_Sec24"/>
    <property type="match status" value="1"/>
</dbReference>
<dbReference type="SUPFAM" id="SSF81995">
    <property type="entry name" value="beta-sandwich domain of Sec23/24"/>
    <property type="match status" value="1"/>
</dbReference>
<dbReference type="SUPFAM" id="SSF82754">
    <property type="entry name" value="C-terminal, gelsolin-like domain of Sec23/24"/>
    <property type="match status" value="1"/>
</dbReference>
<dbReference type="SUPFAM" id="SSF81811">
    <property type="entry name" value="Helical domain of Sec23/24"/>
    <property type="match status" value="1"/>
</dbReference>
<dbReference type="SUPFAM" id="SSF53300">
    <property type="entry name" value="vWA-like"/>
    <property type="match status" value="1"/>
</dbReference>
<dbReference type="SUPFAM" id="SSF82919">
    <property type="entry name" value="Zn-finger domain of Sec23/24"/>
    <property type="match status" value="1"/>
</dbReference>
<proteinExistence type="inferred from homology"/>
<protein>
    <recommendedName>
        <fullName>Protein transport protein SEC24</fullName>
    </recommendedName>
</protein>
<sequence>MSGHRKRVYPQSQFQYANSVPAAGQAAAPGYPPVAGMPQADYSQQAQPQAQPAFLTPAQQQLHQQIDQAVQGVGNMQLHNVPVVDPNGFYQQQPPVTTPGAVPSGAVPQMQQQYAQPAAIGKAMNQLYPIDLLTELPPPISDLSLPPPPLMVPPEKFVVPSETANAPPDFLRCTLNALPKSNSLLKKSKLPLALVIRPYQCLSDSQNPIPLTSDGXXVRCRRCRSYINPFVTFVEGGRRWRCNFCNLANDVPMAFDMSTQGVPTNRYERNEVQHSVVEYLAPREYAVRAPPPSVYSFILDVSQNAIKNGLLATAARTLLETLDTLPNHDDRTRISILAVDNSIHYFSIPTDEEGDHIKMLDVVDLDEPFLPMPDSLFVSLSECRSNLEKLLSQLPEIFQYNIMNKFALGPALKAAHNLIKRIGGKIIVVSSTLPNIGVGKLSKRNEAGVANTSKEASQLLSVQDSFYKNFTIDCNKTQVTIDLFLASDDYMDVASLSNLARYTSGQTHFYPGWSAAKLTDVTKFTKEFSKHLSMDLSMEAVMRARGSSGLRMSRFYGHFFNRSSDLCAFPTFPRDQSYVFEVNLDEQIVRDYAYLQVAVLLSSNTAQRRIRVITICIPTTESLPEVYASADQLAITAYFAQKAIEKVFSSGFEDAREFLNKSVQDILATYKKDIVVSNTAGGAPLRLCANLRMFPLLMHSLTKHMAFRNGIVPSDHRAAALNNLESMPLPYLIKNIYATVYSLHDMPDEAGLQNENGEVVLPEPINATSSLLERYGLYLIDNASELFLWIGGDAVNELTMDVFGTPEILQIPIGKNELPVLENSEFNARVRNIISKIREHSDIITYQSLYIVMGASLSEPVNHASAREVATLRLWATSTLVEDKVL</sequence>
<name>SEC24_LACK1</name>